<sequence>DPHHDFMRF</sequence>
<proteinExistence type="evidence at protein level"/>
<reference evidence="4" key="1">
    <citation type="journal article" date="2009" name="Gen. Comp. Endocrinol.">
        <title>Extended FMRFamides in dipteran insects: conservative expression in the neuroendocrine system is accompanied by rapid sequence evolution.</title>
        <authorList>
            <person name="Rahman M.M."/>
            <person name="Fromm B."/>
            <person name="Neupert S."/>
            <person name="Kreusch S."/>
            <person name="Predel R."/>
        </authorList>
    </citation>
    <scope>PROTEIN SEQUENCE</scope>
    <scope>MASS SPECTROMETRY</scope>
    <scope>AMIDATION AT PHE-9</scope>
    <source>
        <tissue evidence="2">Dorsal ganglionic sheath</tissue>
    </source>
</reference>
<name>FAR14_SARBU</name>
<accession>P85473</accession>
<feature type="peptide" id="PRO_0000371773" description="FMRFamide-14">
    <location>
        <begin position="1"/>
        <end position="9"/>
    </location>
</feature>
<feature type="modified residue" description="Phenylalanine amide" evidence="2">
    <location>
        <position position="9"/>
    </location>
</feature>
<organism>
    <name type="scientific">Sarcophaga bullata</name>
    <name type="common">Grey flesh fly</name>
    <name type="synonym">Neobellieria bullata</name>
    <dbReference type="NCBI Taxonomy" id="7385"/>
    <lineage>
        <taxon>Eukaryota</taxon>
        <taxon>Metazoa</taxon>
        <taxon>Ecdysozoa</taxon>
        <taxon>Arthropoda</taxon>
        <taxon>Hexapoda</taxon>
        <taxon>Insecta</taxon>
        <taxon>Pterygota</taxon>
        <taxon>Neoptera</taxon>
        <taxon>Endopterygota</taxon>
        <taxon>Diptera</taxon>
        <taxon>Brachycera</taxon>
        <taxon>Muscomorpha</taxon>
        <taxon>Oestroidea</taxon>
        <taxon>Sarcophagidae</taxon>
        <taxon>Sarcophaga</taxon>
        <taxon>Neobellieria</taxon>
    </lineage>
</organism>
<evidence type="ECO:0000255" key="1"/>
<evidence type="ECO:0000269" key="2">
    <source>
    </source>
</evidence>
<evidence type="ECO:0000303" key="3">
    <source>
    </source>
</evidence>
<evidence type="ECO:0000305" key="4"/>
<comment type="subcellular location">
    <subcellularLocation>
        <location evidence="4">Secreted</location>
    </subcellularLocation>
</comment>
<comment type="mass spectrometry"/>
<comment type="similarity">
    <text evidence="1">Belongs to the FARP (FMRFamide related peptide) family.</text>
</comment>
<dbReference type="GO" id="GO:0005576">
    <property type="term" value="C:extracellular region"/>
    <property type="evidence" value="ECO:0007669"/>
    <property type="project" value="UniProtKB-SubCell"/>
</dbReference>
<dbReference type="GO" id="GO:0007218">
    <property type="term" value="P:neuropeptide signaling pathway"/>
    <property type="evidence" value="ECO:0007669"/>
    <property type="project" value="UniProtKB-KW"/>
</dbReference>
<keyword id="KW-0027">Amidation</keyword>
<keyword id="KW-0903">Direct protein sequencing</keyword>
<keyword id="KW-0527">Neuropeptide</keyword>
<keyword id="KW-0964">Secreted</keyword>
<protein>
    <recommendedName>
        <fullName>FMRFamide-14</fullName>
    </recommendedName>
    <alternativeName>
        <fullName evidence="3">SabFMRFamide-14</fullName>
    </alternativeName>
</protein>